<name>MURC_BURP6</name>
<proteinExistence type="inferred from homology"/>
<feature type="chain" id="PRO_1000004324" description="UDP-N-acetylmuramate--L-alanine ligase">
    <location>
        <begin position="1"/>
        <end position="465"/>
    </location>
</feature>
<feature type="binding site" evidence="1">
    <location>
        <begin position="112"/>
        <end position="118"/>
    </location>
    <ligand>
        <name>ATP</name>
        <dbReference type="ChEBI" id="CHEBI:30616"/>
    </ligand>
</feature>
<organism>
    <name type="scientific">Burkholderia pseudomallei (strain 668)</name>
    <dbReference type="NCBI Taxonomy" id="320373"/>
    <lineage>
        <taxon>Bacteria</taxon>
        <taxon>Pseudomonadati</taxon>
        <taxon>Pseudomonadota</taxon>
        <taxon>Betaproteobacteria</taxon>
        <taxon>Burkholderiales</taxon>
        <taxon>Burkholderiaceae</taxon>
        <taxon>Burkholderia</taxon>
        <taxon>pseudomallei group</taxon>
    </lineage>
</organism>
<accession>A3NDW3</accession>
<comment type="function">
    <text evidence="1">Cell wall formation.</text>
</comment>
<comment type="catalytic activity">
    <reaction evidence="1">
        <text>UDP-N-acetyl-alpha-D-muramate + L-alanine + ATP = UDP-N-acetyl-alpha-D-muramoyl-L-alanine + ADP + phosphate + H(+)</text>
        <dbReference type="Rhea" id="RHEA:23372"/>
        <dbReference type="ChEBI" id="CHEBI:15378"/>
        <dbReference type="ChEBI" id="CHEBI:30616"/>
        <dbReference type="ChEBI" id="CHEBI:43474"/>
        <dbReference type="ChEBI" id="CHEBI:57972"/>
        <dbReference type="ChEBI" id="CHEBI:70757"/>
        <dbReference type="ChEBI" id="CHEBI:83898"/>
        <dbReference type="ChEBI" id="CHEBI:456216"/>
        <dbReference type="EC" id="6.3.2.8"/>
    </reaction>
</comment>
<comment type="pathway">
    <text evidence="1">Cell wall biogenesis; peptidoglycan biosynthesis.</text>
</comment>
<comment type="subcellular location">
    <subcellularLocation>
        <location evidence="1">Cytoplasm</location>
    </subcellularLocation>
</comment>
<comment type="similarity">
    <text evidence="1">Belongs to the MurCDEF family.</text>
</comment>
<sequence length="465" mass="49026">MKHIVKHIHFVGIGGAGMSGIAEVLVNLGYQVSGSDLARNAVTERLEALGARVSIGHDAANIEGANAVVVSTAVRSDNPEVLAARRLRVPIVPRAVMLAELMRLKQGIAIAGTHGKTTTTSLVASVLAAGGLDPTFVIGGRLTSAGANARLGTGDFIVAEADESDASFLNLYPVIEVITNIDADHMDTYGHDFARLKQAFIEFTQRLPFYGSAVVCIDDANVRQIVPLISKPVVRYGFAADAQVRAENVEARDGRMHFTVRREGREPLPVVLNLPGLHNVQNALAAIAIATDLDVADAAIQQALAEFNGVGRRFQRYGEIAAAGGGAYTLIDDYGHHPVEMAATIAAARGAFPGRRLVLAFQPHRYTRTRDCFDDFVNVLSTVDALVLTEVYAAGEAPISTANGDALSRALRAAGKVEPVFVATVDEVPDALAKLARDGDVVITMGAGSIGGVPGKLAQDTQQKG</sequence>
<keyword id="KW-0067">ATP-binding</keyword>
<keyword id="KW-0131">Cell cycle</keyword>
<keyword id="KW-0132">Cell division</keyword>
<keyword id="KW-0133">Cell shape</keyword>
<keyword id="KW-0961">Cell wall biogenesis/degradation</keyword>
<keyword id="KW-0963">Cytoplasm</keyword>
<keyword id="KW-0436">Ligase</keyword>
<keyword id="KW-0547">Nucleotide-binding</keyword>
<keyword id="KW-0573">Peptidoglycan synthesis</keyword>
<protein>
    <recommendedName>
        <fullName evidence="1">UDP-N-acetylmuramate--L-alanine ligase</fullName>
        <ecNumber evidence="1">6.3.2.8</ecNumber>
    </recommendedName>
    <alternativeName>
        <fullName evidence="1">UDP-N-acetylmuramoyl-L-alanine synthetase</fullName>
    </alternativeName>
</protein>
<evidence type="ECO:0000255" key="1">
    <source>
        <dbReference type="HAMAP-Rule" id="MF_00046"/>
    </source>
</evidence>
<reference key="1">
    <citation type="journal article" date="2010" name="Genome Biol. Evol.">
        <title>Continuing evolution of Burkholderia mallei through genome reduction and large-scale rearrangements.</title>
        <authorList>
            <person name="Losada L."/>
            <person name="Ronning C.M."/>
            <person name="DeShazer D."/>
            <person name="Woods D."/>
            <person name="Fedorova N."/>
            <person name="Kim H.S."/>
            <person name="Shabalina S.A."/>
            <person name="Pearson T.R."/>
            <person name="Brinkac L."/>
            <person name="Tan P."/>
            <person name="Nandi T."/>
            <person name="Crabtree J."/>
            <person name="Badger J."/>
            <person name="Beckstrom-Sternberg S."/>
            <person name="Saqib M."/>
            <person name="Schutzer S.E."/>
            <person name="Keim P."/>
            <person name="Nierman W.C."/>
        </authorList>
    </citation>
    <scope>NUCLEOTIDE SEQUENCE [LARGE SCALE GENOMIC DNA]</scope>
    <source>
        <strain>668</strain>
    </source>
</reference>
<gene>
    <name evidence="1" type="primary">murC</name>
    <name type="ordered locus">BURPS668_3524</name>
</gene>
<dbReference type="EC" id="6.3.2.8" evidence="1"/>
<dbReference type="EMBL" id="CP000570">
    <property type="protein sequence ID" value="ABN84897.1"/>
    <property type="molecule type" value="Genomic_DNA"/>
</dbReference>
<dbReference type="RefSeq" id="WP_004522018.1">
    <property type="nucleotide sequence ID" value="NC_009074.1"/>
</dbReference>
<dbReference type="SMR" id="A3NDW3"/>
<dbReference type="GeneID" id="93061626"/>
<dbReference type="KEGG" id="bpd:BURPS668_3524"/>
<dbReference type="HOGENOM" id="CLU_028104_2_2_4"/>
<dbReference type="UniPathway" id="UPA00219"/>
<dbReference type="GO" id="GO:0005737">
    <property type="term" value="C:cytoplasm"/>
    <property type="evidence" value="ECO:0007669"/>
    <property type="project" value="UniProtKB-SubCell"/>
</dbReference>
<dbReference type="GO" id="GO:0005524">
    <property type="term" value="F:ATP binding"/>
    <property type="evidence" value="ECO:0007669"/>
    <property type="project" value="UniProtKB-UniRule"/>
</dbReference>
<dbReference type="GO" id="GO:0008763">
    <property type="term" value="F:UDP-N-acetylmuramate-L-alanine ligase activity"/>
    <property type="evidence" value="ECO:0007669"/>
    <property type="project" value="UniProtKB-UniRule"/>
</dbReference>
<dbReference type="GO" id="GO:0051301">
    <property type="term" value="P:cell division"/>
    <property type="evidence" value="ECO:0007669"/>
    <property type="project" value="UniProtKB-KW"/>
</dbReference>
<dbReference type="GO" id="GO:0071555">
    <property type="term" value="P:cell wall organization"/>
    <property type="evidence" value="ECO:0007669"/>
    <property type="project" value="UniProtKB-KW"/>
</dbReference>
<dbReference type="GO" id="GO:0009252">
    <property type="term" value="P:peptidoglycan biosynthetic process"/>
    <property type="evidence" value="ECO:0007669"/>
    <property type="project" value="UniProtKB-UniRule"/>
</dbReference>
<dbReference type="GO" id="GO:0008360">
    <property type="term" value="P:regulation of cell shape"/>
    <property type="evidence" value="ECO:0007669"/>
    <property type="project" value="UniProtKB-KW"/>
</dbReference>
<dbReference type="FunFam" id="3.40.1190.10:FF:000001">
    <property type="entry name" value="UDP-N-acetylmuramate--L-alanine ligase"/>
    <property type="match status" value="1"/>
</dbReference>
<dbReference type="Gene3D" id="3.90.190.20">
    <property type="entry name" value="Mur ligase, C-terminal domain"/>
    <property type="match status" value="1"/>
</dbReference>
<dbReference type="Gene3D" id="3.40.1190.10">
    <property type="entry name" value="Mur-like, catalytic domain"/>
    <property type="match status" value="1"/>
</dbReference>
<dbReference type="Gene3D" id="3.40.50.720">
    <property type="entry name" value="NAD(P)-binding Rossmann-like Domain"/>
    <property type="match status" value="1"/>
</dbReference>
<dbReference type="HAMAP" id="MF_00046">
    <property type="entry name" value="MurC"/>
    <property type="match status" value="1"/>
</dbReference>
<dbReference type="InterPro" id="IPR036565">
    <property type="entry name" value="Mur-like_cat_sf"/>
</dbReference>
<dbReference type="InterPro" id="IPR004101">
    <property type="entry name" value="Mur_ligase_C"/>
</dbReference>
<dbReference type="InterPro" id="IPR036615">
    <property type="entry name" value="Mur_ligase_C_dom_sf"/>
</dbReference>
<dbReference type="InterPro" id="IPR013221">
    <property type="entry name" value="Mur_ligase_cen"/>
</dbReference>
<dbReference type="InterPro" id="IPR000713">
    <property type="entry name" value="Mur_ligase_N"/>
</dbReference>
<dbReference type="InterPro" id="IPR050061">
    <property type="entry name" value="MurCDEF_pg_biosynth"/>
</dbReference>
<dbReference type="InterPro" id="IPR005758">
    <property type="entry name" value="UDP-N-AcMur_Ala_ligase_MurC"/>
</dbReference>
<dbReference type="NCBIfam" id="TIGR01082">
    <property type="entry name" value="murC"/>
    <property type="match status" value="1"/>
</dbReference>
<dbReference type="PANTHER" id="PTHR43445:SF3">
    <property type="entry name" value="UDP-N-ACETYLMURAMATE--L-ALANINE LIGASE"/>
    <property type="match status" value="1"/>
</dbReference>
<dbReference type="PANTHER" id="PTHR43445">
    <property type="entry name" value="UDP-N-ACETYLMURAMATE--L-ALANINE LIGASE-RELATED"/>
    <property type="match status" value="1"/>
</dbReference>
<dbReference type="Pfam" id="PF01225">
    <property type="entry name" value="Mur_ligase"/>
    <property type="match status" value="1"/>
</dbReference>
<dbReference type="Pfam" id="PF02875">
    <property type="entry name" value="Mur_ligase_C"/>
    <property type="match status" value="1"/>
</dbReference>
<dbReference type="Pfam" id="PF08245">
    <property type="entry name" value="Mur_ligase_M"/>
    <property type="match status" value="1"/>
</dbReference>
<dbReference type="SUPFAM" id="SSF51984">
    <property type="entry name" value="MurCD N-terminal domain"/>
    <property type="match status" value="1"/>
</dbReference>
<dbReference type="SUPFAM" id="SSF53623">
    <property type="entry name" value="MurD-like peptide ligases, catalytic domain"/>
    <property type="match status" value="1"/>
</dbReference>
<dbReference type="SUPFAM" id="SSF53244">
    <property type="entry name" value="MurD-like peptide ligases, peptide-binding domain"/>
    <property type="match status" value="1"/>
</dbReference>